<accession>P85375</accession>
<sequence>GPAAVVRLLGK</sequence>
<organism>
    <name type="scientific">Nautilus macromphalus</name>
    <name type="common">Bellybutton nautilus</name>
    <dbReference type="NCBI Taxonomy" id="34576"/>
    <lineage>
        <taxon>Eukaryota</taxon>
        <taxon>Metazoa</taxon>
        <taxon>Spiralia</taxon>
        <taxon>Lophotrochozoa</taxon>
        <taxon>Mollusca</taxon>
        <taxon>Cephalopoda</taxon>
        <taxon>Nautiloidea</taxon>
        <taxon>Nautilida</taxon>
        <taxon>Nautilidae</taxon>
        <taxon>Nautilus</taxon>
    </lineage>
</organism>
<feature type="chain" id="PRO_0000371489" description="Uncharacterized protein SMPP8">
    <location>
        <begin position="1" status="less than"/>
        <end position="11" status="greater than"/>
    </location>
</feature>
<feature type="unsure residue" description="L or I" evidence="1">
    <location>
        <position position="8"/>
    </location>
</feature>
<feature type="unsure residue" description="L or I" evidence="1">
    <location>
        <position position="9"/>
    </location>
</feature>
<feature type="non-terminal residue" evidence="2">
    <location>
        <position position="1"/>
    </location>
</feature>
<feature type="non-terminal residue" evidence="2">
    <location>
        <position position="11"/>
    </location>
</feature>
<comment type="tissue specificity">
    <text evidence="1">Nacreous layer of shell.</text>
</comment>
<protein>
    <recommendedName>
        <fullName evidence="2">Uncharacterized protein SMPP8</fullName>
    </recommendedName>
</protein>
<reference key="1">
    <citation type="journal article" date="2009" name="ChemBioChem">
        <title>Evolution of nacre: biochemistry and 'shellomics' of the shell organic matrix of the cephalopod Nautilus macromphalus.</title>
        <authorList>
            <person name="Marie B."/>
            <person name="Marin F."/>
            <person name="Marie A."/>
            <person name="Bedouet L."/>
            <person name="Dubost L."/>
            <person name="Alcaraz G."/>
            <person name="Milet C."/>
            <person name="Luquet G."/>
        </authorList>
    </citation>
    <scope>PROTEIN SEQUENCE</scope>
    <scope>TISSUE SPECIFICITY</scope>
    <source>
        <tissue>Shell</tissue>
    </source>
</reference>
<name>SMP08_NAUMA</name>
<keyword id="KW-0903">Direct protein sequencing</keyword>
<evidence type="ECO:0000269" key="1">
    <source>
    </source>
</evidence>
<evidence type="ECO:0000303" key="2">
    <source>
    </source>
</evidence>
<proteinExistence type="evidence at protein level"/>